<proteinExistence type="evidence at transcript level"/>
<dbReference type="SMR" id="P0CV05"/>
<dbReference type="GlyCosmos" id="P0CV05">
    <property type="glycosylation" value="1 site, No reported glycans"/>
</dbReference>
<dbReference type="GO" id="GO:0005576">
    <property type="term" value="C:extracellular region"/>
    <property type="evidence" value="ECO:0007669"/>
    <property type="project" value="UniProtKB-SubCell"/>
</dbReference>
<dbReference type="GO" id="GO:0042025">
    <property type="term" value="C:host cell nucleus"/>
    <property type="evidence" value="ECO:0007669"/>
    <property type="project" value="UniProtKB-SubCell"/>
</dbReference>
<comment type="function">
    <text evidence="4">Secreted effector that completely suppresses the host cell death induced by cell death-inducing proteins.</text>
</comment>
<comment type="subcellular location">
    <subcellularLocation>
        <location evidence="4">Secreted</location>
    </subcellularLocation>
    <subcellularLocation>
        <location evidence="4">Host nucleus</location>
    </subcellularLocation>
</comment>
<comment type="domain">
    <text evidence="7">The RxLR-dEER motif acts to carry the protein into the host cell cytoplasm through binding to cell surface phosphatidylinositol-3-phosphate.</text>
</comment>
<comment type="similarity">
    <text evidence="6">Belongs to the RxLR effector family.</text>
</comment>
<gene>
    <name evidence="5" type="primary">RXLR36</name>
</gene>
<name>RLR36_PLAVT</name>
<evidence type="ECO:0000255" key="1"/>
<evidence type="ECO:0000255" key="2">
    <source>
        <dbReference type="PROSITE-ProRule" id="PRU00498"/>
    </source>
</evidence>
<evidence type="ECO:0000256" key="3">
    <source>
        <dbReference type="SAM" id="MobiDB-lite"/>
    </source>
</evidence>
<evidence type="ECO:0000269" key="4">
    <source>
    </source>
</evidence>
<evidence type="ECO:0000303" key="5">
    <source>
    </source>
</evidence>
<evidence type="ECO:0000305" key="6"/>
<evidence type="ECO:0000305" key="7">
    <source>
    </source>
</evidence>
<organism>
    <name type="scientific">Plasmopara viticola</name>
    <name type="common">Downy mildew of grapevine</name>
    <name type="synonym">Botrytis viticola</name>
    <dbReference type="NCBI Taxonomy" id="143451"/>
    <lineage>
        <taxon>Eukaryota</taxon>
        <taxon>Sar</taxon>
        <taxon>Stramenopiles</taxon>
        <taxon>Oomycota</taxon>
        <taxon>Peronosporales</taxon>
        <taxon>Peronosporaceae</taxon>
        <taxon>Plasmopara</taxon>
    </lineage>
</organism>
<protein>
    <recommendedName>
        <fullName evidence="5">Secreted RxLR effector protein 36</fullName>
    </recommendedName>
</protein>
<keyword id="KW-0325">Glycoprotein</keyword>
<keyword id="KW-1048">Host nucleus</keyword>
<keyword id="KW-0964">Secreted</keyword>
<keyword id="KW-0732">Signal</keyword>
<keyword id="KW-0843">Virulence</keyword>
<accession>P0CV05</accession>
<reference key="1">
    <citation type="journal article" date="2018" name="Front. Plant Sci.">
        <title>In planta functional analysis and subcellular localization of the oomycete pathogen Plasmopara viticola candidate RXLR effector repertoire.</title>
        <authorList>
            <person name="Liu Y."/>
            <person name="Lan X."/>
            <person name="Song S."/>
            <person name="Yin L."/>
            <person name="Dry I.B."/>
            <person name="Qu J."/>
            <person name="Xiang J."/>
            <person name="Lu J."/>
        </authorList>
    </citation>
    <scope>NUCLEOTIDE SEQUENCE [MRNA]</scope>
    <scope>DOMAIN</scope>
    <scope>FUNCTION</scope>
    <scope>SUBCELLULAR LOCATION</scope>
</reference>
<sequence length="399" mass="44095">MRGTIYVAIAILVAASSRSSAESDQVEPQQAPNSDFVTSDDTIYEVLPTRILRESRGSNDKLAVGAGDEERMMNNLSNGNSLSESLEQTTIKLTTDDVIAKAEEAIKNFKQLEPVLNMIRRKRQRIDPTPSNLGGQALHAPPNPDKSLVSVTENAPNVIANRLEKSGPTVIMKNAVRSITQHDYRPAPSGSSTTSAAATDIRLHEQPIARKGSELFKNIYPNKMVSNSVEHPLHMLEGNENSAHTVTVNGITYLMAQGPALGRKDTVNEEAKKIHEAFLKAFSLPFHQYPEETTHMLRLLRWSYNSSPNNINTATSLKDLANSQDPDVIMNLLDMDLKKLLGDGRSAVKATEKNLKEAYSVKLLIMYELFYDFCHGNRKLVGNLPSKSDRVDSILKVTT</sequence>
<feature type="signal peptide" evidence="1">
    <location>
        <begin position="1"/>
        <end position="21"/>
    </location>
</feature>
<feature type="chain" id="PRO_0000447914" description="Secreted RxLR effector protein 36">
    <location>
        <begin position="22"/>
        <end position="399"/>
    </location>
</feature>
<feature type="region of interest" description="Disordered" evidence="3">
    <location>
        <begin position="126"/>
        <end position="145"/>
    </location>
</feature>
<feature type="short sequence motif" description="RxLR-dEER" evidence="7">
    <location>
        <begin position="50"/>
        <end position="71"/>
    </location>
</feature>
<feature type="glycosylation site" description="N-linked (GlcNAc...) asparagine" evidence="2">
    <location>
        <position position="75"/>
    </location>
</feature>